<accession>Q65XV2</accession>
<accession>A0A0P0WH25</accession>
<accession>Q8LLW2</accession>
<reference key="1">
    <citation type="journal article" date="2006" name="Plant Cell">
        <title>Rice XA21 binding protein 3 is a ubiquitin ligase required for full Xa21-mediated disease resistance.</title>
        <authorList>
            <person name="Wang Y.S."/>
            <person name="Pi L.Y."/>
            <person name="Chen X."/>
            <person name="Chakrabarty P.K."/>
            <person name="Jiang J."/>
            <person name="De Leon A.L."/>
            <person name="Liu G.Z."/>
            <person name="Li L."/>
            <person name="Benny U."/>
            <person name="Oard J."/>
            <person name="Ronald P.C."/>
            <person name="Song W.Y."/>
        </authorList>
    </citation>
    <scope>NUCLEOTIDE SEQUENCE [MRNA]</scope>
    <scope>FUNCTION</scope>
    <scope>PHOSPHORYLATION</scope>
    <scope>INTERACTION WITH XA21</scope>
    <scope>MUTAGENESIS OF CYS-323</scope>
    <source>
        <strain>cv. Taipei 309</strain>
    </source>
</reference>
<reference key="2">
    <citation type="journal article" date="2005" name="Mol. Genet. Genomics">
        <title>A fine physical map of the rice chromosome 5.</title>
        <authorList>
            <person name="Cheng C.-H."/>
            <person name="Chung M.C."/>
            <person name="Liu S.-M."/>
            <person name="Chen S.-K."/>
            <person name="Kao F.Y."/>
            <person name="Lin S.-J."/>
            <person name="Hsiao S.-H."/>
            <person name="Tseng I.C."/>
            <person name="Hsing Y.-I.C."/>
            <person name="Wu H.-P."/>
            <person name="Chen C.-S."/>
            <person name="Shaw J.-F."/>
            <person name="Wu J."/>
            <person name="Matsumoto T."/>
            <person name="Sasaki T."/>
            <person name="Chen H.-C."/>
            <person name="Chow T.-Y."/>
        </authorList>
    </citation>
    <scope>NUCLEOTIDE SEQUENCE [LARGE SCALE GENOMIC DNA]</scope>
    <source>
        <strain>cv. Nipponbare</strain>
    </source>
</reference>
<reference key="3">
    <citation type="journal article" date="2005" name="Nature">
        <title>The map-based sequence of the rice genome.</title>
        <authorList>
            <consortium name="International rice genome sequencing project (IRGSP)"/>
        </authorList>
    </citation>
    <scope>NUCLEOTIDE SEQUENCE [LARGE SCALE GENOMIC DNA]</scope>
    <source>
        <strain>cv. Nipponbare</strain>
    </source>
</reference>
<reference key="4">
    <citation type="journal article" date="2008" name="Nucleic Acids Res.">
        <title>The rice annotation project database (RAP-DB): 2008 update.</title>
        <authorList>
            <consortium name="The rice annotation project (RAP)"/>
        </authorList>
    </citation>
    <scope>GENOME REANNOTATION</scope>
    <source>
        <strain>cv. Nipponbare</strain>
    </source>
</reference>
<reference key="5">
    <citation type="journal article" date="2013" name="Rice">
        <title>Improvement of the Oryza sativa Nipponbare reference genome using next generation sequence and optical map data.</title>
        <authorList>
            <person name="Kawahara Y."/>
            <person name="de la Bastide M."/>
            <person name="Hamilton J.P."/>
            <person name="Kanamori H."/>
            <person name="McCombie W.R."/>
            <person name="Ouyang S."/>
            <person name="Schwartz D.C."/>
            <person name="Tanaka T."/>
            <person name="Wu J."/>
            <person name="Zhou S."/>
            <person name="Childs K.L."/>
            <person name="Davidson R.M."/>
            <person name="Lin H."/>
            <person name="Quesada-Ocampo L."/>
            <person name="Vaillancourt B."/>
            <person name="Sakai H."/>
            <person name="Lee S.S."/>
            <person name="Kim J."/>
            <person name="Numa H."/>
            <person name="Itoh T."/>
            <person name="Buell C.R."/>
            <person name="Matsumoto T."/>
        </authorList>
    </citation>
    <scope>GENOME REANNOTATION</scope>
    <source>
        <strain>cv. Nipponbare</strain>
    </source>
</reference>
<reference key="6">
    <citation type="journal article" date="2005" name="PLoS Biol.">
        <title>The genomes of Oryza sativa: a history of duplications.</title>
        <authorList>
            <person name="Yu J."/>
            <person name="Wang J."/>
            <person name="Lin W."/>
            <person name="Li S."/>
            <person name="Li H."/>
            <person name="Zhou J."/>
            <person name="Ni P."/>
            <person name="Dong W."/>
            <person name="Hu S."/>
            <person name="Zeng C."/>
            <person name="Zhang J."/>
            <person name="Zhang Y."/>
            <person name="Li R."/>
            <person name="Xu Z."/>
            <person name="Li S."/>
            <person name="Li X."/>
            <person name="Zheng H."/>
            <person name="Cong L."/>
            <person name="Lin L."/>
            <person name="Yin J."/>
            <person name="Geng J."/>
            <person name="Li G."/>
            <person name="Shi J."/>
            <person name="Liu J."/>
            <person name="Lv H."/>
            <person name="Li J."/>
            <person name="Wang J."/>
            <person name="Deng Y."/>
            <person name="Ran L."/>
            <person name="Shi X."/>
            <person name="Wang X."/>
            <person name="Wu Q."/>
            <person name="Li C."/>
            <person name="Ren X."/>
            <person name="Wang J."/>
            <person name="Wang X."/>
            <person name="Li D."/>
            <person name="Liu D."/>
            <person name="Zhang X."/>
            <person name="Ji Z."/>
            <person name="Zhao W."/>
            <person name="Sun Y."/>
            <person name="Zhang Z."/>
            <person name="Bao J."/>
            <person name="Han Y."/>
            <person name="Dong L."/>
            <person name="Ji J."/>
            <person name="Chen P."/>
            <person name="Wu S."/>
            <person name="Liu J."/>
            <person name="Xiao Y."/>
            <person name="Bu D."/>
            <person name="Tan J."/>
            <person name="Yang L."/>
            <person name="Ye C."/>
            <person name="Zhang J."/>
            <person name="Xu J."/>
            <person name="Zhou Y."/>
            <person name="Yu Y."/>
            <person name="Zhang B."/>
            <person name="Zhuang S."/>
            <person name="Wei H."/>
            <person name="Liu B."/>
            <person name="Lei M."/>
            <person name="Yu H."/>
            <person name="Li Y."/>
            <person name="Xu H."/>
            <person name="Wei S."/>
            <person name="He X."/>
            <person name="Fang L."/>
            <person name="Zhang Z."/>
            <person name="Zhang Y."/>
            <person name="Huang X."/>
            <person name="Su Z."/>
            <person name="Tong W."/>
            <person name="Li J."/>
            <person name="Tong Z."/>
            <person name="Li S."/>
            <person name="Ye J."/>
            <person name="Wang L."/>
            <person name="Fang L."/>
            <person name="Lei T."/>
            <person name="Chen C.-S."/>
            <person name="Chen H.-C."/>
            <person name="Xu Z."/>
            <person name="Li H."/>
            <person name="Huang H."/>
            <person name="Zhang F."/>
            <person name="Xu H."/>
            <person name="Li N."/>
            <person name="Zhao C."/>
            <person name="Li S."/>
            <person name="Dong L."/>
            <person name="Huang Y."/>
            <person name="Li L."/>
            <person name="Xi Y."/>
            <person name="Qi Q."/>
            <person name="Li W."/>
            <person name="Zhang B."/>
            <person name="Hu W."/>
            <person name="Zhang Y."/>
            <person name="Tian X."/>
            <person name="Jiao Y."/>
            <person name="Liang X."/>
            <person name="Jin J."/>
            <person name="Gao L."/>
            <person name="Zheng W."/>
            <person name="Hao B."/>
            <person name="Liu S.-M."/>
            <person name="Wang W."/>
            <person name="Yuan L."/>
            <person name="Cao M."/>
            <person name="McDermott J."/>
            <person name="Samudrala R."/>
            <person name="Wang J."/>
            <person name="Wong G.K.-S."/>
            <person name="Yang H."/>
        </authorList>
    </citation>
    <scope>NUCLEOTIDE SEQUENCE [LARGE SCALE GENOMIC DNA]</scope>
    <source>
        <strain>cv. Nipponbare</strain>
    </source>
</reference>
<reference key="7">
    <citation type="journal article" date="2003" name="Science">
        <title>Collection, mapping, and annotation of over 28,000 cDNA clones from japonica rice.</title>
        <authorList>
            <consortium name="The rice full-length cDNA consortium"/>
        </authorList>
    </citation>
    <scope>NUCLEOTIDE SEQUENCE [LARGE SCALE MRNA]</scope>
    <source>
        <strain>cv. Nipponbare</strain>
    </source>
</reference>
<gene>
    <name type="primary">XB3</name>
    <name type="ordered locus">Os05g0112000</name>
    <name type="ordered locus">LOC_Os05g02130</name>
    <name type="ORF">OsJ_16866</name>
    <name type="ORF">P0016H04.16</name>
</gene>
<keyword id="KW-0040">ANK repeat</keyword>
<keyword id="KW-0479">Metal-binding</keyword>
<keyword id="KW-0611">Plant defense</keyword>
<keyword id="KW-1185">Reference proteome</keyword>
<keyword id="KW-0677">Repeat</keyword>
<keyword id="KW-0808">Transferase</keyword>
<keyword id="KW-0833">Ubl conjugation pathway</keyword>
<keyword id="KW-0862">Zinc</keyword>
<keyword id="KW-0863">Zinc-finger</keyword>
<feature type="chain" id="PRO_0000395744" description="E3 ubiquitin-protein ligase XB3">
    <location>
        <begin position="1"/>
        <end position="450"/>
    </location>
</feature>
<feature type="repeat" description="ANK 1">
    <location>
        <begin position="11"/>
        <end position="40"/>
    </location>
</feature>
<feature type="repeat" description="ANK 2">
    <location>
        <begin position="46"/>
        <end position="75"/>
    </location>
</feature>
<feature type="repeat" description="ANK 3">
    <location>
        <begin position="79"/>
        <end position="108"/>
    </location>
</feature>
<feature type="repeat" description="ANK 4">
    <location>
        <begin position="113"/>
        <end position="142"/>
    </location>
</feature>
<feature type="repeat" description="ANK 5">
    <location>
        <begin position="158"/>
        <end position="187"/>
    </location>
</feature>
<feature type="repeat" description="ANK 6">
    <location>
        <begin position="195"/>
        <end position="225"/>
    </location>
</feature>
<feature type="zinc finger region" description="RING-type" evidence="1">
    <location>
        <begin position="323"/>
        <end position="372"/>
    </location>
</feature>
<feature type="region of interest" description="Disordered" evidence="2">
    <location>
        <begin position="291"/>
        <end position="312"/>
    </location>
</feature>
<feature type="region of interest" description="Disordered" evidence="2">
    <location>
        <begin position="385"/>
        <end position="450"/>
    </location>
</feature>
<feature type="mutagenesis site" description="Loss of autoubiquitination." evidence="3">
    <original>C</original>
    <variation>A</variation>
    <location>
        <position position="323"/>
    </location>
</feature>
<name>XB3_ORYSJ</name>
<dbReference type="EC" id="2.3.2.27"/>
<dbReference type="EMBL" id="AF272860">
    <property type="protein sequence ID" value="AAK58690.1"/>
    <property type="molecule type" value="mRNA"/>
</dbReference>
<dbReference type="EMBL" id="AC079356">
    <property type="protein sequence ID" value="AAU44210.1"/>
    <property type="molecule type" value="Genomic_DNA"/>
</dbReference>
<dbReference type="EMBL" id="AP008211">
    <property type="protein sequence ID" value="BAF16363.1"/>
    <property type="molecule type" value="Genomic_DNA"/>
</dbReference>
<dbReference type="EMBL" id="AP014961">
    <property type="protein sequence ID" value="BAS91932.1"/>
    <property type="molecule type" value="Genomic_DNA"/>
</dbReference>
<dbReference type="EMBL" id="CM000142">
    <property type="protein sequence ID" value="EEE62082.1"/>
    <property type="molecule type" value="Genomic_DNA"/>
</dbReference>
<dbReference type="EMBL" id="AK107650">
    <property type="protein sequence ID" value="BAG98113.1"/>
    <property type="molecule type" value="mRNA"/>
</dbReference>
<dbReference type="RefSeq" id="XP_015640114.1">
    <property type="nucleotide sequence ID" value="XM_015784628.1"/>
</dbReference>
<dbReference type="SMR" id="Q65XV2"/>
<dbReference type="FunCoup" id="Q65XV2">
    <property type="interactions" value="391"/>
</dbReference>
<dbReference type="STRING" id="39947.Q65XV2"/>
<dbReference type="PaxDb" id="39947-Q65XV2"/>
<dbReference type="EnsemblPlants" id="Os05t0112000-01">
    <property type="protein sequence ID" value="Os05t0112000-01"/>
    <property type="gene ID" value="Os05g0112000"/>
</dbReference>
<dbReference type="Gramene" id="Os05t0112000-01">
    <property type="protein sequence ID" value="Os05t0112000-01"/>
    <property type="gene ID" value="Os05g0112000"/>
</dbReference>
<dbReference type="KEGG" id="dosa:Os05g0112000"/>
<dbReference type="eggNOG" id="KOG4177">
    <property type="taxonomic scope" value="Eukaryota"/>
</dbReference>
<dbReference type="InParanoid" id="Q65XV2"/>
<dbReference type="OMA" id="AYYGHFE"/>
<dbReference type="OrthoDB" id="194358at2759"/>
<dbReference type="UniPathway" id="UPA00143"/>
<dbReference type="Proteomes" id="UP000000763">
    <property type="component" value="Chromosome 5"/>
</dbReference>
<dbReference type="Proteomes" id="UP000007752">
    <property type="component" value="Chromosome 5"/>
</dbReference>
<dbReference type="Proteomes" id="UP000059680">
    <property type="component" value="Chromosome 5"/>
</dbReference>
<dbReference type="ExpressionAtlas" id="Q65XV2">
    <property type="expression patterns" value="baseline and differential"/>
</dbReference>
<dbReference type="GO" id="GO:0004842">
    <property type="term" value="F:ubiquitin-protein transferase activity"/>
    <property type="evidence" value="ECO:0000314"/>
    <property type="project" value="UniProtKB"/>
</dbReference>
<dbReference type="GO" id="GO:0008270">
    <property type="term" value="F:zinc ion binding"/>
    <property type="evidence" value="ECO:0007669"/>
    <property type="project" value="UniProtKB-KW"/>
</dbReference>
<dbReference type="GO" id="GO:0042742">
    <property type="term" value="P:defense response to bacterium"/>
    <property type="evidence" value="ECO:0000315"/>
    <property type="project" value="UniProtKB"/>
</dbReference>
<dbReference type="GO" id="GO:0051865">
    <property type="term" value="P:protein autoubiquitination"/>
    <property type="evidence" value="ECO:0000314"/>
    <property type="project" value="UniProtKB"/>
</dbReference>
<dbReference type="FunFam" id="1.25.40.20:FF:000414">
    <property type="entry name" value="E3 ubiquitin-protein ligase XB3"/>
    <property type="match status" value="1"/>
</dbReference>
<dbReference type="Gene3D" id="1.25.40.20">
    <property type="entry name" value="Ankyrin repeat-containing domain"/>
    <property type="match status" value="3"/>
</dbReference>
<dbReference type="Gene3D" id="3.30.40.10">
    <property type="entry name" value="Zinc/RING finger domain, C3HC4 (zinc finger)"/>
    <property type="match status" value="1"/>
</dbReference>
<dbReference type="InterPro" id="IPR002110">
    <property type="entry name" value="Ankyrin_rpt"/>
</dbReference>
<dbReference type="InterPro" id="IPR036770">
    <property type="entry name" value="Ankyrin_rpt-contain_sf"/>
</dbReference>
<dbReference type="InterPro" id="IPR056760">
    <property type="entry name" value="RING_XB3-like"/>
</dbReference>
<dbReference type="InterPro" id="IPR001841">
    <property type="entry name" value="Znf_RING"/>
</dbReference>
<dbReference type="InterPro" id="IPR013083">
    <property type="entry name" value="Znf_RING/FYVE/PHD"/>
</dbReference>
<dbReference type="PANTHER" id="PTHR24128:SF14">
    <property type="entry name" value="E3 UBIQUITIN-PROTEIN LIGASE XBAT31-RELATED"/>
    <property type="match status" value="1"/>
</dbReference>
<dbReference type="PANTHER" id="PTHR24128">
    <property type="entry name" value="HOMEOBOX PROTEIN WARIAI"/>
    <property type="match status" value="1"/>
</dbReference>
<dbReference type="Pfam" id="PF00023">
    <property type="entry name" value="Ank"/>
    <property type="match status" value="1"/>
</dbReference>
<dbReference type="Pfam" id="PF12796">
    <property type="entry name" value="Ank_2"/>
    <property type="match status" value="2"/>
</dbReference>
<dbReference type="Pfam" id="PF24921">
    <property type="entry name" value="RING_XB3-XBAT31"/>
    <property type="match status" value="1"/>
</dbReference>
<dbReference type="SMART" id="SM00248">
    <property type="entry name" value="ANK"/>
    <property type="match status" value="6"/>
</dbReference>
<dbReference type="SUPFAM" id="SSF48403">
    <property type="entry name" value="Ankyrin repeat"/>
    <property type="match status" value="1"/>
</dbReference>
<dbReference type="SUPFAM" id="SSF57850">
    <property type="entry name" value="RING/U-box"/>
    <property type="match status" value="1"/>
</dbReference>
<dbReference type="PROSITE" id="PS50297">
    <property type="entry name" value="ANK_REP_REGION"/>
    <property type="match status" value="1"/>
</dbReference>
<dbReference type="PROSITE" id="PS50088">
    <property type="entry name" value="ANK_REPEAT"/>
    <property type="match status" value="4"/>
</dbReference>
<dbReference type="PROSITE" id="PS50089">
    <property type="entry name" value="ZF_RING_2"/>
    <property type="match status" value="1"/>
</dbReference>
<proteinExistence type="evidence at protein level"/>
<evidence type="ECO:0000255" key="1">
    <source>
        <dbReference type="PROSITE-ProRule" id="PRU00175"/>
    </source>
</evidence>
<evidence type="ECO:0000256" key="2">
    <source>
        <dbReference type="SAM" id="MobiDB-lite"/>
    </source>
</evidence>
<evidence type="ECO:0000269" key="3">
    <source>
    </source>
</evidence>
<sequence length="450" mass="48203">MGHGVSCARTGDEHDFFRAAQLGDLDALAALLAADPSLARRATLYDRLSVLHIAAANGRIEVLSMFLDRGAPPDAVNRHKQTPLMLAAMHGKIDCVLKLLQADANILMFDSVHARTCLHHAAYYGHVDCLQAILAAAQTTPVADSWGFARFVNVRDDHGATPLHLAARQGRPGCVQVLLENGAIVSALTGSYGFPGSTSLHLAARSGNLDCIRKLLAWGADRLQRDSAGRIPYSVALKRNHGACAALLNPTSAEPMVWPSPLKFISELEPEAKALLEAALMEANREREKKILNGTKYSLPSPSPGDDSADDDACSEVSDTELCCICFDQACTIEVQDCGHQMCAPCTLALCCHNKPNPTTLTPPSPACPFCRGSISRLVVAQTRSACDPDKPSSLQLTRKRSRRSHNLSEGSSSFKGLPSAMGSFSKLGRGSSRMADSDSSNLDKPEHDL</sequence>
<comment type="function">
    <text evidence="3">E3 ubiquitin-protein ligase required for full accumulation of the LRR receptor kinase XA21 and XA21-mediated disease resistance. Binding to XA21 may stabilize the receptor kinase and maintain its protein level. Autoubiquitinated in vitro.</text>
</comment>
<comment type="catalytic activity">
    <reaction>
        <text>S-ubiquitinyl-[E2 ubiquitin-conjugating enzyme]-L-cysteine + [acceptor protein]-L-lysine = [E2 ubiquitin-conjugating enzyme]-L-cysteine + N(6)-ubiquitinyl-[acceptor protein]-L-lysine.</text>
        <dbReference type="EC" id="2.3.2.27"/>
    </reaction>
</comment>
<comment type="pathway">
    <text>Protein modification; protein ubiquitination.</text>
</comment>
<comment type="subunit">
    <text evidence="3">Interacts (via ankyrin repeats) with XA21.</text>
</comment>
<comment type="PTM">
    <text evidence="3">Phosphorylated by XA21.</text>
</comment>
<protein>
    <recommendedName>
        <fullName>E3 ubiquitin-protein ligase XB3</fullName>
        <ecNumber>2.3.2.27</ecNumber>
    </recommendedName>
    <alternativeName>
        <fullName>Ankyrin repeat domain and RING finger-containing protein XB3</fullName>
    </alternativeName>
    <alternativeName>
        <fullName>RING-type E3 ubiquitin transferase XB3</fullName>
    </alternativeName>
    <alternativeName>
        <fullName>XA21-binding protein 3</fullName>
    </alternativeName>
</protein>
<organism>
    <name type="scientific">Oryza sativa subsp. japonica</name>
    <name type="common">Rice</name>
    <dbReference type="NCBI Taxonomy" id="39947"/>
    <lineage>
        <taxon>Eukaryota</taxon>
        <taxon>Viridiplantae</taxon>
        <taxon>Streptophyta</taxon>
        <taxon>Embryophyta</taxon>
        <taxon>Tracheophyta</taxon>
        <taxon>Spermatophyta</taxon>
        <taxon>Magnoliopsida</taxon>
        <taxon>Liliopsida</taxon>
        <taxon>Poales</taxon>
        <taxon>Poaceae</taxon>
        <taxon>BOP clade</taxon>
        <taxon>Oryzoideae</taxon>
        <taxon>Oryzeae</taxon>
        <taxon>Oryzinae</taxon>
        <taxon>Oryza</taxon>
        <taxon>Oryza sativa</taxon>
    </lineage>
</organism>